<organism>
    <name type="scientific">Rhizobium rhizogenes (strain K84 / ATCC BAA-868)</name>
    <name type="common">Agrobacterium radiobacter</name>
    <dbReference type="NCBI Taxonomy" id="311403"/>
    <lineage>
        <taxon>Bacteria</taxon>
        <taxon>Pseudomonadati</taxon>
        <taxon>Pseudomonadota</taxon>
        <taxon>Alphaproteobacteria</taxon>
        <taxon>Hyphomicrobiales</taxon>
        <taxon>Rhizobiaceae</taxon>
        <taxon>Rhizobium/Agrobacterium group</taxon>
        <taxon>Rhizobium</taxon>
    </lineage>
</organism>
<feature type="chain" id="PRO_1000117154" description="Phospho-N-acetylmuramoyl-pentapeptide-transferase">
    <location>
        <begin position="1"/>
        <end position="373"/>
    </location>
</feature>
<feature type="transmembrane region" description="Helical" evidence="1">
    <location>
        <begin position="34"/>
        <end position="54"/>
    </location>
</feature>
<feature type="transmembrane region" description="Helical" evidence="1">
    <location>
        <begin position="78"/>
        <end position="98"/>
    </location>
</feature>
<feature type="transmembrane region" description="Helical" evidence="1">
    <location>
        <begin position="100"/>
        <end position="120"/>
    </location>
</feature>
<feature type="transmembrane region" description="Helical" evidence="1">
    <location>
        <begin position="141"/>
        <end position="161"/>
    </location>
</feature>
<feature type="transmembrane region" description="Helical" evidence="1">
    <location>
        <begin position="181"/>
        <end position="201"/>
    </location>
</feature>
<feature type="transmembrane region" description="Helical" evidence="1">
    <location>
        <begin position="212"/>
        <end position="232"/>
    </location>
</feature>
<feature type="transmembrane region" description="Helical" evidence="1">
    <location>
        <begin position="252"/>
        <end position="272"/>
    </location>
</feature>
<feature type="transmembrane region" description="Helical" evidence="1">
    <location>
        <begin position="275"/>
        <end position="295"/>
    </location>
</feature>
<feature type="transmembrane region" description="Helical" evidence="1">
    <location>
        <begin position="301"/>
        <end position="321"/>
    </location>
</feature>
<feature type="transmembrane region" description="Helical" evidence="1">
    <location>
        <begin position="350"/>
        <end position="370"/>
    </location>
</feature>
<keyword id="KW-0131">Cell cycle</keyword>
<keyword id="KW-0132">Cell division</keyword>
<keyword id="KW-0997">Cell inner membrane</keyword>
<keyword id="KW-1003">Cell membrane</keyword>
<keyword id="KW-0133">Cell shape</keyword>
<keyword id="KW-0961">Cell wall biogenesis/degradation</keyword>
<keyword id="KW-0460">Magnesium</keyword>
<keyword id="KW-0472">Membrane</keyword>
<keyword id="KW-0479">Metal-binding</keyword>
<keyword id="KW-0573">Peptidoglycan synthesis</keyword>
<keyword id="KW-0808">Transferase</keyword>
<keyword id="KW-0812">Transmembrane</keyword>
<keyword id="KW-1133">Transmembrane helix</keyword>
<proteinExistence type="inferred from homology"/>
<accession>B9JH54</accession>
<sequence>MLIWLAELSDHIHFFSTHFRFLNLFRYITFRTGGALFTSALIVFLFGPRIISSLRVRQGRGQPIRADGPQTHFKKAGTPTMGGLMILAGIVVSSLLWADLANVYVVATLLVTLGFGAIGFYDDYLKVTKQSDKGFSGRARLGLEFIIAAIAVYFMMNTALSSGPAGSTFGSSIAFPFFKSFMLNLGMFFVLFGAFVIVSAGNAVNLTDGLDGLAIVPVMIAAASFGVIAYLAGNFVFADYLAINFVPGTGELAVVLGAVIGAGLGFLWFNAPPAAIFMGDTGSLALGGLIGTVAVATKHEIVMAIIGGLFVLEALSVIIQVGFFKMTRRRVFLMAPIHHHFEKKGWTESQVVVRFWIVAVILAMIGLSTLKLR</sequence>
<dbReference type="EC" id="2.7.8.13" evidence="1"/>
<dbReference type="EMBL" id="CP000628">
    <property type="protein sequence ID" value="ACM27051.1"/>
    <property type="molecule type" value="Genomic_DNA"/>
</dbReference>
<dbReference type="RefSeq" id="WP_007697182.1">
    <property type="nucleotide sequence ID" value="NC_011985.1"/>
</dbReference>
<dbReference type="SMR" id="B9JH54"/>
<dbReference type="STRING" id="311403.Arad_3000"/>
<dbReference type="GeneID" id="86848922"/>
<dbReference type="KEGG" id="ara:Arad_3000"/>
<dbReference type="eggNOG" id="COG0472">
    <property type="taxonomic scope" value="Bacteria"/>
</dbReference>
<dbReference type="HOGENOM" id="CLU_023982_0_0_5"/>
<dbReference type="UniPathway" id="UPA00219"/>
<dbReference type="Proteomes" id="UP000001600">
    <property type="component" value="Chromosome 1"/>
</dbReference>
<dbReference type="GO" id="GO:0005886">
    <property type="term" value="C:plasma membrane"/>
    <property type="evidence" value="ECO:0007669"/>
    <property type="project" value="UniProtKB-SubCell"/>
</dbReference>
<dbReference type="GO" id="GO:0046872">
    <property type="term" value="F:metal ion binding"/>
    <property type="evidence" value="ECO:0007669"/>
    <property type="project" value="UniProtKB-KW"/>
</dbReference>
<dbReference type="GO" id="GO:0008963">
    <property type="term" value="F:phospho-N-acetylmuramoyl-pentapeptide-transferase activity"/>
    <property type="evidence" value="ECO:0007669"/>
    <property type="project" value="UniProtKB-UniRule"/>
</dbReference>
<dbReference type="GO" id="GO:0051992">
    <property type="term" value="F:UDP-N-acetylmuramoyl-L-alanyl-D-glutamyl-meso-2,6-diaminopimelyl-D-alanyl-D-alanine:undecaprenyl-phosphate transferase activity"/>
    <property type="evidence" value="ECO:0007669"/>
    <property type="project" value="RHEA"/>
</dbReference>
<dbReference type="GO" id="GO:0051301">
    <property type="term" value="P:cell division"/>
    <property type="evidence" value="ECO:0007669"/>
    <property type="project" value="UniProtKB-KW"/>
</dbReference>
<dbReference type="GO" id="GO:0071555">
    <property type="term" value="P:cell wall organization"/>
    <property type="evidence" value="ECO:0007669"/>
    <property type="project" value="UniProtKB-KW"/>
</dbReference>
<dbReference type="GO" id="GO:0009252">
    <property type="term" value="P:peptidoglycan biosynthetic process"/>
    <property type="evidence" value="ECO:0007669"/>
    <property type="project" value="UniProtKB-UniRule"/>
</dbReference>
<dbReference type="GO" id="GO:0008360">
    <property type="term" value="P:regulation of cell shape"/>
    <property type="evidence" value="ECO:0007669"/>
    <property type="project" value="UniProtKB-KW"/>
</dbReference>
<dbReference type="CDD" id="cd06852">
    <property type="entry name" value="GT_MraY"/>
    <property type="match status" value="1"/>
</dbReference>
<dbReference type="HAMAP" id="MF_00038">
    <property type="entry name" value="MraY"/>
    <property type="match status" value="1"/>
</dbReference>
<dbReference type="InterPro" id="IPR000715">
    <property type="entry name" value="Glycosyl_transferase_4"/>
</dbReference>
<dbReference type="InterPro" id="IPR003524">
    <property type="entry name" value="PNAcMuramoyl-5peptid_Trfase"/>
</dbReference>
<dbReference type="InterPro" id="IPR018480">
    <property type="entry name" value="PNAcMuramoyl-5peptid_Trfase_CS"/>
</dbReference>
<dbReference type="NCBIfam" id="TIGR00445">
    <property type="entry name" value="mraY"/>
    <property type="match status" value="1"/>
</dbReference>
<dbReference type="PANTHER" id="PTHR22926">
    <property type="entry name" value="PHOSPHO-N-ACETYLMURAMOYL-PENTAPEPTIDE-TRANSFERASE"/>
    <property type="match status" value="1"/>
</dbReference>
<dbReference type="PANTHER" id="PTHR22926:SF5">
    <property type="entry name" value="PHOSPHO-N-ACETYLMURAMOYL-PENTAPEPTIDE-TRANSFERASE HOMOLOG"/>
    <property type="match status" value="1"/>
</dbReference>
<dbReference type="Pfam" id="PF00953">
    <property type="entry name" value="Glycos_transf_4"/>
    <property type="match status" value="1"/>
</dbReference>
<dbReference type="Pfam" id="PF10555">
    <property type="entry name" value="MraY_sig1"/>
    <property type="match status" value="1"/>
</dbReference>
<dbReference type="PROSITE" id="PS01347">
    <property type="entry name" value="MRAY_1"/>
    <property type="match status" value="1"/>
</dbReference>
<dbReference type="PROSITE" id="PS01348">
    <property type="entry name" value="MRAY_2"/>
    <property type="match status" value="1"/>
</dbReference>
<evidence type="ECO:0000255" key="1">
    <source>
        <dbReference type="HAMAP-Rule" id="MF_00038"/>
    </source>
</evidence>
<protein>
    <recommendedName>
        <fullName evidence="1">Phospho-N-acetylmuramoyl-pentapeptide-transferase</fullName>
        <ecNumber evidence="1">2.7.8.13</ecNumber>
    </recommendedName>
    <alternativeName>
        <fullName evidence="1">UDP-MurNAc-pentapeptide phosphotransferase</fullName>
    </alternativeName>
</protein>
<comment type="function">
    <text evidence="1">Catalyzes the initial step of the lipid cycle reactions in the biosynthesis of the cell wall peptidoglycan: transfers peptidoglycan precursor phospho-MurNAc-pentapeptide from UDP-MurNAc-pentapeptide onto the lipid carrier undecaprenyl phosphate, yielding undecaprenyl-pyrophosphoryl-MurNAc-pentapeptide, known as lipid I.</text>
</comment>
<comment type="catalytic activity">
    <reaction evidence="1">
        <text>UDP-N-acetyl-alpha-D-muramoyl-L-alanyl-gamma-D-glutamyl-meso-2,6-diaminopimeloyl-D-alanyl-D-alanine + di-trans,octa-cis-undecaprenyl phosphate = di-trans,octa-cis-undecaprenyl diphospho-N-acetyl-alpha-D-muramoyl-L-alanyl-D-glutamyl-meso-2,6-diaminopimeloyl-D-alanyl-D-alanine + UMP</text>
        <dbReference type="Rhea" id="RHEA:28386"/>
        <dbReference type="ChEBI" id="CHEBI:57865"/>
        <dbReference type="ChEBI" id="CHEBI:60392"/>
        <dbReference type="ChEBI" id="CHEBI:61386"/>
        <dbReference type="ChEBI" id="CHEBI:61387"/>
        <dbReference type="EC" id="2.7.8.13"/>
    </reaction>
</comment>
<comment type="cofactor">
    <cofactor evidence="1">
        <name>Mg(2+)</name>
        <dbReference type="ChEBI" id="CHEBI:18420"/>
    </cofactor>
</comment>
<comment type="pathway">
    <text evidence="1">Cell wall biogenesis; peptidoglycan biosynthesis.</text>
</comment>
<comment type="subcellular location">
    <subcellularLocation>
        <location evidence="1">Cell inner membrane</location>
        <topology evidence="1">Multi-pass membrane protein</topology>
    </subcellularLocation>
</comment>
<comment type="similarity">
    <text evidence="1">Belongs to the glycosyltransferase 4 family. MraY subfamily.</text>
</comment>
<name>MRAY_RHIR8</name>
<gene>
    <name evidence="1" type="primary">mraY</name>
    <name type="ordered locus">Arad_3000</name>
</gene>
<reference key="1">
    <citation type="journal article" date="2009" name="J. Bacteriol.">
        <title>Genome sequences of three Agrobacterium biovars help elucidate the evolution of multichromosome genomes in bacteria.</title>
        <authorList>
            <person name="Slater S.C."/>
            <person name="Goldman B.S."/>
            <person name="Goodner B."/>
            <person name="Setubal J.C."/>
            <person name="Farrand S.K."/>
            <person name="Nester E.W."/>
            <person name="Burr T.J."/>
            <person name="Banta L."/>
            <person name="Dickerman A.W."/>
            <person name="Paulsen I."/>
            <person name="Otten L."/>
            <person name="Suen G."/>
            <person name="Welch R."/>
            <person name="Almeida N.F."/>
            <person name="Arnold F."/>
            <person name="Burton O.T."/>
            <person name="Du Z."/>
            <person name="Ewing A."/>
            <person name="Godsy E."/>
            <person name="Heisel S."/>
            <person name="Houmiel K.L."/>
            <person name="Jhaveri J."/>
            <person name="Lu J."/>
            <person name="Miller N.M."/>
            <person name="Norton S."/>
            <person name="Chen Q."/>
            <person name="Phoolcharoen W."/>
            <person name="Ohlin V."/>
            <person name="Ondrusek D."/>
            <person name="Pride N."/>
            <person name="Stricklin S.L."/>
            <person name="Sun J."/>
            <person name="Wheeler C."/>
            <person name="Wilson L."/>
            <person name="Zhu H."/>
            <person name="Wood D.W."/>
        </authorList>
    </citation>
    <scope>NUCLEOTIDE SEQUENCE [LARGE SCALE GENOMIC DNA]</scope>
    <source>
        <strain>K84 / ATCC BAA-868</strain>
    </source>
</reference>